<protein>
    <recommendedName>
        <fullName evidence="2">Translation initiation factor IF-2</fullName>
    </recommendedName>
</protein>
<gene>
    <name evidence="2" type="primary">infB</name>
    <name type="ordered locus">Fnod_1441</name>
</gene>
<name>IF2_FERNB</name>
<evidence type="ECO:0000250" key="1"/>
<evidence type="ECO:0000255" key="2">
    <source>
        <dbReference type="HAMAP-Rule" id="MF_00100"/>
    </source>
</evidence>
<evidence type="ECO:0000256" key="3">
    <source>
        <dbReference type="SAM" id="MobiDB-lite"/>
    </source>
</evidence>
<accession>A7HN01</accession>
<reference key="1">
    <citation type="submission" date="2007-07" db="EMBL/GenBank/DDBJ databases">
        <title>Complete sequence of Fervidobacterium nodosum Rt17-B1.</title>
        <authorList>
            <consortium name="US DOE Joint Genome Institute"/>
            <person name="Copeland A."/>
            <person name="Lucas S."/>
            <person name="Lapidus A."/>
            <person name="Barry K."/>
            <person name="Glavina del Rio T."/>
            <person name="Dalin E."/>
            <person name="Tice H."/>
            <person name="Pitluck S."/>
            <person name="Saunders E."/>
            <person name="Brettin T."/>
            <person name="Bruce D."/>
            <person name="Detter J.C."/>
            <person name="Han C."/>
            <person name="Schmutz J."/>
            <person name="Larimer F."/>
            <person name="Land M."/>
            <person name="Hauser L."/>
            <person name="Kyrpides N."/>
            <person name="Mikhailova N."/>
            <person name="Nelson K."/>
            <person name="Gogarten J.P."/>
            <person name="Noll K."/>
            <person name="Richardson P."/>
        </authorList>
    </citation>
    <scope>NUCLEOTIDE SEQUENCE [LARGE SCALE GENOMIC DNA]</scope>
    <source>
        <strain>ATCC 35602 / DSM 5306 / Rt17-B1</strain>
    </source>
</reference>
<comment type="function">
    <text evidence="2">One of the essential components for the initiation of protein synthesis. Protects formylmethionyl-tRNA from spontaneous hydrolysis and promotes its binding to the 30S ribosomal subunits. Also involved in the hydrolysis of GTP during the formation of the 70S ribosomal complex.</text>
</comment>
<comment type="subcellular location">
    <subcellularLocation>
        <location evidence="2">Cytoplasm</location>
    </subcellularLocation>
</comment>
<comment type="similarity">
    <text evidence="2">Belongs to the TRAFAC class translation factor GTPase superfamily. Classic translation factor GTPase family. IF-2 subfamily.</text>
</comment>
<feature type="chain" id="PRO_1000071289" description="Translation initiation factor IF-2">
    <location>
        <begin position="1"/>
        <end position="685"/>
    </location>
</feature>
<feature type="domain" description="tr-type G">
    <location>
        <begin position="175"/>
        <end position="352"/>
    </location>
</feature>
<feature type="region of interest" description="Disordered" evidence="3">
    <location>
        <begin position="60"/>
        <end position="79"/>
    </location>
</feature>
<feature type="region of interest" description="G1" evidence="1">
    <location>
        <begin position="184"/>
        <end position="191"/>
    </location>
</feature>
<feature type="region of interest" description="G2" evidence="1">
    <location>
        <begin position="209"/>
        <end position="213"/>
    </location>
</feature>
<feature type="region of interest" description="G3" evidence="1">
    <location>
        <begin position="230"/>
        <end position="233"/>
    </location>
</feature>
<feature type="region of interest" description="G4" evidence="1">
    <location>
        <begin position="284"/>
        <end position="287"/>
    </location>
</feature>
<feature type="region of interest" description="G5" evidence="1">
    <location>
        <begin position="321"/>
        <end position="323"/>
    </location>
</feature>
<feature type="compositionally biased region" description="Basic and acidic residues" evidence="3">
    <location>
        <begin position="64"/>
        <end position="79"/>
    </location>
</feature>
<feature type="binding site" evidence="2">
    <location>
        <begin position="184"/>
        <end position="191"/>
    </location>
    <ligand>
        <name>GTP</name>
        <dbReference type="ChEBI" id="CHEBI:37565"/>
    </ligand>
</feature>
<feature type="binding site" evidence="2">
    <location>
        <begin position="230"/>
        <end position="234"/>
    </location>
    <ligand>
        <name>GTP</name>
        <dbReference type="ChEBI" id="CHEBI:37565"/>
    </ligand>
</feature>
<feature type="binding site" evidence="2">
    <location>
        <begin position="284"/>
        <end position="287"/>
    </location>
    <ligand>
        <name>GTP</name>
        <dbReference type="ChEBI" id="CHEBI:37565"/>
    </ligand>
</feature>
<dbReference type="EMBL" id="CP000771">
    <property type="protein sequence ID" value="ABS61284.1"/>
    <property type="molecule type" value="Genomic_DNA"/>
</dbReference>
<dbReference type="RefSeq" id="WP_011994589.1">
    <property type="nucleotide sequence ID" value="NC_009718.1"/>
</dbReference>
<dbReference type="SMR" id="A7HN01"/>
<dbReference type="STRING" id="381764.Fnod_1441"/>
<dbReference type="KEGG" id="fno:Fnod_1441"/>
<dbReference type="eggNOG" id="COG0532">
    <property type="taxonomic scope" value="Bacteria"/>
</dbReference>
<dbReference type="HOGENOM" id="CLU_006301_5_1_0"/>
<dbReference type="OrthoDB" id="9811804at2"/>
<dbReference type="Proteomes" id="UP000002415">
    <property type="component" value="Chromosome"/>
</dbReference>
<dbReference type="GO" id="GO:0005829">
    <property type="term" value="C:cytosol"/>
    <property type="evidence" value="ECO:0007669"/>
    <property type="project" value="TreeGrafter"/>
</dbReference>
<dbReference type="GO" id="GO:0005525">
    <property type="term" value="F:GTP binding"/>
    <property type="evidence" value="ECO:0007669"/>
    <property type="project" value="UniProtKB-KW"/>
</dbReference>
<dbReference type="GO" id="GO:0003924">
    <property type="term" value="F:GTPase activity"/>
    <property type="evidence" value="ECO:0007669"/>
    <property type="project" value="UniProtKB-UniRule"/>
</dbReference>
<dbReference type="GO" id="GO:0003743">
    <property type="term" value="F:translation initiation factor activity"/>
    <property type="evidence" value="ECO:0007669"/>
    <property type="project" value="UniProtKB-UniRule"/>
</dbReference>
<dbReference type="CDD" id="cd01887">
    <property type="entry name" value="IF2_eIF5B"/>
    <property type="match status" value="1"/>
</dbReference>
<dbReference type="CDD" id="cd03702">
    <property type="entry name" value="IF2_mtIF2_II"/>
    <property type="match status" value="1"/>
</dbReference>
<dbReference type="CDD" id="cd03692">
    <property type="entry name" value="mtIF2_IVc"/>
    <property type="match status" value="1"/>
</dbReference>
<dbReference type="FunFam" id="2.40.30.10:FF:000008">
    <property type="entry name" value="Translation initiation factor IF-2"/>
    <property type="match status" value="1"/>
</dbReference>
<dbReference type="FunFam" id="2.40.30.10:FF:000054">
    <property type="entry name" value="Translation initiation factor IF-2"/>
    <property type="match status" value="1"/>
</dbReference>
<dbReference type="FunFam" id="3.40.50.10050:FF:000001">
    <property type="entry name" value="Translation initiation factor IF-2"/>
    <property type="match status" value="1"/>
</dbReference>
<dbReference type="FunFam" id="3.40.50.300:FF:000019">
    <property type="entry name" value="Translation initiation factor IF-2"/>
    <property type="match status" value="1"/>
</dbReference>
<dbReference type="Gene3D" id="1.10.10.2480">
    <property type="match status" value="1"/>
</dbReference>
<dbReference type="Gene3D" id="3.40.50.300">
    <property type="entry name" value="P-loop containing nucleotide triphosphate hydrolases"/>
    <property type="match status" value="1"/>
</dbReference>
<dbReference type="Gene3D" id="2.40.30.10">
    <property type="entry name" value="Translation factors"/>
    <property type="match status" value="2"/>
</dbReference>
<dbReference type="Gene3D" id="3.40.50.10050">
    <property type="entry name" value="Translation initiation factor IF- 2, domain 3"/>
    <property type="match status" value="1"/>
</dbReference>
<dbReference type="HAMAP" id="MF_00100_B">
    <property type="entry name" value="IF_2_B"/>
    <property type="match status" value="1"/>
</dbReference>
<dbReference type="InterPro" id="IPR053905">
    <property type="entry name" value="EF-G-like_DII"/>
</dbReference>
<dbReference type="InterPro" id="IPR044145">
    <property type="entry name" value="IF2_II"/>
</dbReference>
<dbReference type="InterPro" id="IPR006847">
    <property type="entry name" value="IF2_N"/>
</dbReference>
<dbReference type="InterPro" id="IPR027417">
    <property type="entry name" value="P-loop_NTPase"/>
</dbReference>
<dbReference type="InterPro" id="IPR005225">
    <property type="entry name" value="Small_GTP-bd"/>
</dbReference>
<dbReference type="InterPro" id="IPR000795">
    <property type="entry name" value="T_Tr_GTP-bd_dom"/>
</dbReference>
<dbReference type="InterPro" id="IPR000178">
    <property type="entry name" value="TF_IF2_bacterial-like"/>
</dbReference>
<dbReference type="InterPro" id="IPR015760">
    <property type="entry name" value="TIF_IF2"/>
</dbReference>
<dbReference type="InterPro" id="IPR023115">
    <property type="entry name" value="TIF_IF2_dom3"/>
</dbReference>
<dbReference type="InterPro" id="IPR036925">
    <property type="entry name" value="TIF_IF2_dom3_sf"/>
</dbReference>
<dbReference type="InterPro" id="IPR009000">
    <property type="entry name" value="Transl_B-barrel_sf"/>
</dbReference>
<dbReference type="NCBIfam" id="TIGR00487">
    <property type="entry name" value="IF-2"/>
    <property type="match status" value="1"/>
</dbReference>
<dbReference type="NCBIfam" id="TIGR00231">
    <property type="entry name" value="small_GTP"/>
    <property type="match status" value="1"/>
</dbReference>
<dbReference type="PANTHER" id="PTHR43381:SF5">
    <property type="entry name" value="TR-TYPE G DOMAIN-CONTAINING PROTEIN"/>
    <property type="match status" value="1"/>
</dbReference>
<dbReference type="PANTHER" id="PTHR43381">
    <property type="entry name" value="TRANSLATION INITIATION FACTOR IF-2-RELATED"/>
    <property type="match status" value="1"/>
</dbReference>
<dbReference type="Pfam" id="PF22042">
    <property type="entry name" value="EF-G_D2"/>
    <property type="match status" value="1"/>
</dbReference>
<dbReference type="Pfam" id="PF00009">
    <property type="entry name" value="GTP_EFTU"/>
    <property type="match status" value="1"/>
</dbReference>
<dbReference type="Pfam" id="PF11987">
    <property type="entry name" value="IF-2"/>
    <property type="match status" value="1"/>
</dbReference>
<dbReference type="Pfam" id="PF04760">
    <property type="entry name" value="IF2_N"/>
    <property type="match status" value="2"/>
</dbReference>
<dbReference type="SUPFAM" id="SSF52156">
    <property type="entry name" value="Initiation factor IF2/eIF5b, domain 3"/>
    <property type="match status" value="1"/>
</dbReference>
<dbReference type="SUPFAM" id="SSF52540">
    <property type="entry name" value="P-loop containing nucleoside triphosphate hydrolases"/>
    <property type="match status" value="1"/>
</dbReference>
<dbReference type="SUPFAM" id="SSF50447">
    <property type="entry name" value="Translation proteins"/>
    <property type="match status" value="2"/>
</dbReference>
<dbReference type="PROSITE" id="PS51722">
    <property type="entry name" value="G_TR_2"/>
    <property type="match status" value="1"/>
</dbReference>
<sequence length="685" mass="77128">MARLRVYELAKQLDMDTKELLHELEELGIEVKSHMSFIDEETVNILLDIYKQTLDEEEDISLAKTREPSKEKTEAKKPPVHITEADLKLDKFAEKIKIPQNRIIQDFFMKGEILKPGQTISISLAKKIAKMYDVRLTFEEDETAVKEQPKLENPLDELKRQFEEIYQNNKDKLVNRPPVVTVMGHVDHGKTTLLDYIRKTRVAEKEEGGITQSVGAYQVIVNGKKITFIDTPGHEVFTEMRARGAQATDIVVLVVAADDGVMPQTIEAYNHAKSANVPIIVAINKIDKANANVDMTKQELVTKLNLIPEDWGGDTIVVPISARNGINVDTLLEMILLVAEMQDIRCIPDSPVRAVTIETRLDKGYGPVANAIVKDGVLKVGDYVVAGKVFGKVKALIDDKGKRLKEAEPSTPVMIVGFEELPDPHSIIYVVDSKEKALEIVEKVREIEARELRKKRQVKLEEILKRMQETEKRELKLILKADTVGSLQALQNAIAKLRTNEIDIDIVHSAVGAINSSDIMLASASEAIILGFRVKADNQASKLAESEGVQIKTYTIIYKLLEDLKAALEGMLEPEEVEEKTGYGEIKKAFKIHKYGNIAGVQMYDGYVDKSGFVRIYRNGALVFEGKIESLKHYQQDVNKVSAPQECGIKFQNFDDIKEGDELEFYIIKKIPRKLTIIEEEKQQI</sequence>
<proteinExistence type="inferred from homology"/>
<keyword id="KW-0963">Cytoplasm</keyword>
<keyword id="KW-0342">GTP-binding</keyword>
<keyword id="KW-0396">Initiation factor</keyword>
<keyword id="KW-0547">Nucleotide-binding</keyword>
<keyword id="KW-0648">Protein biosynthesis</keyword>
<keyword id="KW-1185">Reference proteome</keyword>
<organism>
    <name type="scientific">Fervidobacterium nodosum (strain ATCC 35602 / DSM 5306 / Rt17-B1)</name>
    <dbReference type="NCBI Taxonomy" id="381764"/>
    <lineage>
        <taxon>Bacteria</taxon>
        <taxon>Thermotogati</taxon>
        <taxon>Thermotogota</taxon>
        <taxon>Thermotogae</taxon>
        <taxon>Thermotogales</taxon>
        <taxon>Fervidobacteriaceae</taxon>
        <taxon>Fervidobacterium</taxon>
    </lineage>
</organism>